<comment type="function">
    <text evidence="1">Involved in phosphonate degradation.</text>
</comment>
<comment type="catalytic activity">
    <reaction evidence="1">
        <text>(2-aminoethyl)phosphonate + pyruvate = phosphonoacetaldehyde + L-alanine</text>
        <dbReference type="Rhea" id="RHEA:17021"/>
        <dbReference type="ChEBI" id="CHEBI:15361"/>
        <dbReference type="ChEBI" id="CHEBI:57418"/>
        <dbReference type="ChEBI" id="CHEBI:57972"/>
        <dbReference type="ChEBI" id="CHEBI:58383"/>
        <dbReference type="EC" id="2.6.1.37"/>
    </reaction>
</comment>
<comment type="cofactor">
    <cofactor evidence="1">
        <name>pyridoxal 5'-phosphate</name>
        <dbReference type="ChEBI" id="CHEBI:597326"/>
    </cofactor>
</comment>
<comment type="subunit">
    <text evidence="1">Homodimer.</text>
</comment>
<comment type="similarity">
    <text evidence="1">Belongs to the class-V pyridoxal-phosphate-dependent aminotransferase family. PhnW subfamily.</text>
</comment>
<gene>
    <name evidence="1" type="primary">phnW</name>
    <name type="ordered locus">BC_1327</name>
</gene>
<reference key="1">
    <citation type="journal article" date="2003" name="Nature">
        <title>Genome sequence of Bacillus cereus and comparative analysis with Bacillus anthracis.</title>
        <authorList>
            <person name="Ivanova N."/>
            <person name="Sorokin A."/>
            <person name="Anderson I."/>
            <person name="Galleron N."/>
            <person name="Candelon B."/>
            <person name="Kapatral V."/>
            <person name="Bhattacharyya A."/>
            <person name="Reznik G."/>
            <person name="Mikhailova N."/>
            <person name="Lapidus A."/>
            <person name="Chu L."/>
            <person name="Mazur M."/>
            <person name="Goltsman E."/>
            <person name="Larsen N."/>
            <person name="D'Souza M."/>
            <person name="Walunas T."/>
            <person name="Grechkin Y."/>
            <person name="Pusch G."/>
            <person name="Haselkorn R."/>
            <person name="Fonstein M."/>
            <person name="Ehrlich S.D."/>
            <person name="Overbeek R."/>
            <person name="Kyrpides N.C."/>
        </authorList>
    </citation>
    <scope>NUCLEOTIDE SEQUENCE [LARGE SCALE GENOMIC DNA]</scope>
    <source>
        <strain>ATCC 14579 / DSM 31 / CCUG 7414 / JCM 2152 / NBRC 15305 / NCIMB 9373 / NCTC 2599 / NRRL B-3711</strain>
    </source>
</reference>
<protein>
    <recommendedName>
        <fullName evidence="1">2-aminoethylphosphonate--pyruvate transaminase</fullName>
        <ecNumber evidence="1">2.6.1.37</ecNumber>
    </recommendedName>
    <alternativeName>
        <fullName evidence="1">2-aminoethylphosphonate aminotransferase</fullName>
    </alternativeName>
    <alternativeName>
        <fullName evidence="1">AEP transaminase</fullName>
        <shortName evidence="1">AEPT</shortName>
    </alternativeName>
</protein>
<organism>
    <name type="scientific">Bacillus cereus (strain ATCC 14579 / DSM 31 / CCUG 7414 / JCM 2152 / NBRC 15305 / NCIMB 9373 / NCTC 2599 / NRRL B-3711)</name>
    <dbReference type="NCBI Taxonomy" id="226900"/>
    <lineage>
        <taxon>Bacteria</taxon>
        <taxon>Bacillati</taxon>
        <taxon>Bacillota</taxon>
        <taxon>Bacilli</taxon>
        <taxon>Bacillales</taxon>
        <taxon>Bacillaceae</taxon>
        <taxon>Bacillus</taxon>
        <taxon>Bacillus cereus group</taxon>
    </lineage>
</organism>
<proteinExistence type="inferred from homology"/>
<keyword id="KW-0032">Aminotransferase</keyword>
<keyword id="KW-0663">Pyridoxal phosphate</keyword>
<keyword id="KW-0670">Pyruvate</keyword>
<keyword id="KW-1185">Reference proteome</keyword>
<keyword id="KW-0808">Transferase</keyword>
<sequence>MNENHYLLLTPGPLTTTKSVKEVMLYDWCTWDDEYNTMVQEVRAKLVSLATKEEEKYTTVLMQGSGTFSVEAVIGSVIPANGKLLVCTNGAYGKRIVQMAEMLQIDVVISQTEEWEPTNIVEVEKLLQEDKEITHIAVVHCETTTGIINPIVDVCKLGQQYGKVTIVDAMSSFGGIEIDIADLQIDFLISSANKCIQGVPGFGFVIAKRDELLKCKGQGRSLSLDLYDQWETMEKQNGKWRFTSPTHVVHAFYQALLELEKEGGVRARYNRYYNNQKLLVNRMGEIGFKPLVDKKYQSPIITSFIYPKEGFEFQQLYNELKRYGFVIYPGKISKVDTFRIGNIGDVHEEDINRLVDCIAKGAVIG</sequence>
<feature type="chain" id="PRO_0000286755" description="2-aminoethylphosphonate--pyruvate transaminase">
    <location>
        <begin position="1"/>
        <end position="365"/>
    </location>
</feature>
<feature type="modified residue" description="N6-(pyridoxal phosphate)lysine" evidence="1">
    <location>
        <position position="194"/>
    </location>
</feature>
<evidence type="ECO:0000255" key="1">
    <source>
        <dbReference type="HAMAP-Rule" id="MF_01376"/>
    </source>
</evidence>
<dbReference type="EC" id="2.6.1.37" evidence="1"/>
<dbReference type="EMBL" id="AE016877">
    <property type="protein sequence ID" value="AAP08310.1"/>
    <property type="molecule type" value="Genomic_DNA"/>
</dbReference>
<dbReference type="RefSeq" id="NP_831109.1">
    <property type="nucleotide sequence ID" value="NC_004722.1"/>
</dbReference>
<dbReference type="RefSeq" id="WP_001004774.1">
    <property type="nucleotide sequence ID" value="NZ_CP138336.1"/>
</dbReference>
<dbReference type="SMR" id="Q81G81"/>
<dbReference type="STRING" id="226900.BC_1327"/>
<dbReference type="KEGG" id="bce:BC1327"/>
<dbReference type="PATRIC" id="fig|226900.8.peg.1300"/>
<dbReference type="HOGENOM" id="CLU_027686_3_1_9"/>
<dbReference type="OrthoDB" id="389074at2"/>
<dbReference type="Proteomes" id="UP000001417">
    <property type="component" value="Chromosome"/>
</dbReference>
<dbReference type="GO" id="GO:0047304">
    <property type="term" value="F:2-aminoethylphosphonate-pyruvate transaminase activity"/>
    <property type="evidence" value="ECO:0007669"/>
    <property type="project" value="UniProtKB-UniRule"/>
</dbReference>
<dbReference type="GO" id="GO:0019700">
    <property type="term" value="P:organic phosphonate catabolic process"/>
    <property type="evidence" value="ECO:0007669"/>
    <property type="project" value="InterPro"/>
</dbReference>
<dbReference type="Gene3D" id="3.90.1150.10">
    <property type="entry name" value="Aspartate Aminotransferase, domain 1"/>
    <property type="match status" value="1"/>
</dbReference>
<dbReference type="Gene3D" id="3.40.640.10">
    <property type="entry name" value="Type I PLP-dependent aspartate aminotransferase-like (Major domain)"/>
    <property type="match status" value="1"/>
</dbReference>
<dbReference type="HAMAP" id="MF_01376">
    <property type="entry name" value="PhnW_aminotrans_5"/>
    <property type="match status" value="1"/>
</dbReference>
<dbReference type="InterPro" id="IPR000192">
    <property type="entry name" value="Aminotrans_V_dom"/>
</dbReference>
<dbReference type="InterPro" id="IPR012703">
    <property type="entry name" value="NH2EtPonate_pyrv_transaminase"/>
</dbReference>
<dbReference type="InterPro" id="IPR015424">
    <property type="entry name" value="PyrdxlP-dep_Trfase"/>
</dbReference>
<dbReference type="InterPro" id="IPR015421">
    <property type="entry name" value="PyrdxlP-dep_Trfase_major"/>
</dbReference>
<dbReference type="InterPro" id="IPR015422">
    <property type="entry name" value="PyrdxlP-dep_Trfase_small"/>
</dbReference>
<dbReference type="InterPro" id="IPR024169">
    <property type="entry name" value="SP_NH2Trfase/AEP_transaminase"/>
</dbReference>
<dbReference type="NCBIfam" id="TIGR03301">
    <property type="entry name" value="PhnW-AepZ"/>
    <property type="match status" value="1"/>
</dbReference>
<dbReference type="NCBIfam" id="NF010006">
    <property type="entry name" value="PRK13479.1"/>
    <property type="match status" value="1"/>
</dbReference>
<dbReference type="NCBIfam" id="TIGR02326">
    <property type="entry name" value="transamin_PhnW"/>
    <property type="match status" value="1"/>
</dbReference>
<dbReference type="PANTHER" id="PTHR42778">
    <property type="entry name" value="2-AMINOETHYLPHOSPHONATE--PYRUVATE TRANSAMINASE"/>
    <property type="match status" value="1"/>
</dbReference>
<dbReference type="PANTHER" id="PTHR42778:SF1">
    <property type="entry name" value="2-AMINOETHYLPHOSPHONATE--PYRUVATE TRANSAMINASE"/>
    <property type="match status" value="1"/>
</dbReference>
<dbReference type="Pfam" id="PF00266">
    <property type="entry name" value="Aminotran_5"/>
    <property type="match status" value="1"/>
</dbReference>
<dbReference type="PIRSF" id="PIRSF000524">
    <property type="entry name" value="SPT"/>
    <property type="match status" value="1"/>
</dbReference>
<dbReference type="SUPFAM" id="SSF53383">
    <property type="entry name" value="PLP-dependent transferases"/>
    <property type="match status" value="1"/>
</dbReference>
<accession>Q81G81</accession>
<name>PHNW_BACCR</name>